<name>TIG_RICAE</name>
<gene>
    <name evidence="1" type="primary">tig</name>
    <name type="ordered locus">RAF_ORF1194</name>
</gene>
<reference key="1">
    <citation type="journal article" date="2009" name="BMC Genomics">
        <title>Analysis of the Rickettsia africae genome reveals that virulence acquisition in Rickettsia species may be explained by genome reduction.</title>
        <authorList>
            <person name="Fournier P.-E."/>
            <person name="El Karkouri K."/>
            <person name="Leroy Q."/>
            <person name="Robert C."/>
            <person name="Giumelli B."/>
            <person name="Renesto P."/>
            <person name="Socolovschi C."/>
            <person name="Parola P."/>
            <person name="Audic S."/>
            <person name="Raoult D."/>
        </authorList>
    </citation>
    <scope>NUCLEOTIDE SEQUENCE [LARGE SCALE GENOMIC DNA]</scope>
    <source>
        <strain>ESF-5</strain>
    </source>
</reference>
<protein>
    <recommendedName>
        <fullName evidence="1">Trigger factor</fullName>
        <shortName evidence="1">TF</shortName>
        <ecNumber evidence="1">5.2.1.8</ecNumber>
    </recommendedName>
    <alternativeName>
        <fullName evidence="1">PPIase</fullName>
    </alternativeName>
</protein>
<accession>C3PLX7</accession>
<comment type="function">
    <text evidence="1">Involved in protein export. Acts as a chaperone by maintaining the newly synthesized protein in an open conformation. Functions as a peptidyl-prolyl cis-trans isomerase.</text>
</comment>
<comment type="catalytic activity">
    <reaction evidence="1">
        <text>[protein]-peptidylproline (omega=180) = [protein]-peptidylproline (omega=0)</text>
        <dbReference type="Rhea" id="RHEA:16237"/>
        <dbReference type="Rhea" id="RHEA-COMP:10747"/>
        <dbReference type="Rhea" id="RHEA-COMP:10748"/>
        <dbReference type="ChEBI" id="CHEBI:83833"/>
        <dbReference type="ChEBI" id="CHEBI:83834"/>
        <dbReference type="EC" id="5.2.1.8"/>
    </reaction>
</comment>
<comment type="subcellular location">
    <subcellularLocation>
        <location>Cytoplasm</location>
    </subcellularLocation>
    <text evidence="1">About half TF is bound to the ribosome near the polypeptide exit tunnel while the other half is free in the cytoplasm.</text>
</comment>
<comment type="domain">
    <text evidence="1">Consists of 3 domains; the N-terminus binds the ribosome, the middle domain has PPIase activity, while the C-terminus has intrinsic chaperone activity on its own.</text>
</comment>
<comment type="similarity">
    <text evidence="1">Belongs to the FKBP-type PPIase family. Tig subfamily.</text>
</comment>
<keyword id="KW-0131">Cell cycle</keyword>
<keyword id="KW-0132">Cell division</keyword>
<keyword id="KW-0143">Chaperone</keyword>
<keyword id="KW-0963">Cytoplasm</keyword>
<keyword id="KW-0413">Isomerase</keyword>
<keyword id="KW-0697">Rotamase</keyword>
<evidence type="ECO:0000255" key="1">
    <source>
        <dbReference type="HAMAP-Rule" id="MF_00303"/>
    </source>
</evidence>
<sequence>MGITILKNEGLDFHARISTPLSEIDDDIQKELLDLTKKVKIAGFRVGKVPVSIVKKKYGTSVRNDIIERRINHSVNHVIKEHNLNIIGRPTIEELQNESDKALEFTVKMELLPKITIPDLKKISLDRPKLEVNSKDVEEQLEKLAALTKNYTKESKAKIKDGDQVTIDAIGYIKEKAFEDGKLNDFKVIIGSNALIPGFEKQLIGSKTGSEVDVNVTFPENYHAKDLAGKDARFVVQIKAVHTAEPTVIDDEFAKKFQSNSLEELRTHFTKQIENESEEAINTIMKMNLFDKLEKLLDFDVPESLLEQEKNILKSGTDKNEQDESLLKDKSSKEITAYYNKLALRRVRIGLLLAEYAKSKNLQLEPDDLRKVIMQQARNFPGQENMIFDFYKNNPRAIEGLKGPALEDKAVQYIFNHEIKLKEKKYTKEELEKYLEAEEQRITLI</sequence>
<feature type="chain" id="PRO_1000204998" description="Trigger factor">
    <location>
        <begin position="1"/>
        <end position="445"/>
    </location>
</feature>
<feature type="domain" description="PPIase FKBP-type" evidence="1">
    <location>
        <begin position="162"/>
        <end position="247"/>
    </location>
</feature>
<organism>
    <name type="scientific">Rickettsia africae (strain ESF-5)</name>
    <dbReference type="NCBI Taxonomy" id="347255"/>
    <lineage>
        <taxon>Bacteria</taxon>
        <taxon>Pseudomonadati</taxon>
        <taxon>Pseudomonadota</taxon>
        <taxon>Alphaproteobacteria</taxon>
        <taxon>Rickettsiales</taxon>
        <taxon>Rickettsiaceae</taxon>
        <taxon>Rickettsieae</taxon>
        <taxon>Rickettsia</taxon>
        <taxon>spotted fever group</taxon>
    </lineage>
</organism>
<dbReference type="EC" id="5.2.1.8" evidence="1"/>
<dbReference type="EMBL" id="CP001612">
    <property type="protein sequence ID" value="ACP53967.1"/>
    <property type="molecule type" value="Genomic_DNA"/>
</dbReference>
<dbReference type="RefSeq" id="WP_012720087.1">
    <property type="nucleotide sequence ID" value="NC_012633.1"/>
</dbReference>
<dbReference type="SMR" id="C3PLX7"/>
<dbReference type="KEGG" id="raf:RAF_ORF1194"/>
<dbReference type="HOGENOM" id="CLU_033058_2_2_5"/>
<dbReference type="Proteomes" id="UP000002305">
    <property type="component" value="Chromosome"/>
</dbReference>
<dbReference type="GO" id="GO:0005737">
    <property type="term" value="C:cytoplasm"/>
    <property type="evidence" value="ECO:0007669"/>
    <property type="project" value="UniProtKB-SubCell"/>
</dbReference>
<dbReference type="GO" id="GO:0003755">
    <property type="term" value="F:peptidyl-prolyl cis-trans isomerase activity"/>
    <property type="evidence" value="ECO:0007669"/>
    <property type="project" value="UniProtKB-UniRule"/>
</dbReference>
<dbReference type="GO" id="GO:0044183">
    <property type="term" value="F:protein folding chaperone"/>
    <property type="evidence" value="ECO:0007669"/>
    <property type="project" value="TreeGrafter"/>
</dbReference>
<dbReference type="GO" id="GO:0043022">
    <property type="term" value="F:ribosome binding"/>
    <property type="evidence" value="ECO:0007669"/>
    <property type="project" value="TreeGrafter"/>
</dbReference>
<dbReference type="GO" id="GO:0051083">
    <property type="term" value="P:'de novo' cotranslational protein folding"/>
    <property type="evidence" value="ECO:0007669"/>
    <property type="project" value="TreeGrafter"/>
</dbReference>
<dbReference type="GO" id="GO:0051301">
    <property type="term" value="P:cell division"/>
    <property type="evidence" value="ECO:0007669"/>
    <property type="project" value="UniProtKB-KW"/>
</dbReference>
<dbReference type="GO" id="GO:0061077">
    <property type="term" value="P:chaperone-mediated protein folding"/>
    <property type="evidence" value="ECO:0007669"/>
    <property type="project" value="TreeGrafter"/>
</dbReference>
<dbReference type="GO" id="GO:0015031">
    <property type="term" value="P:protein transport"/>
    <property type="evidence" value="ECO:0007669"/>
    <property type="project" value="UniProtKB-UniRule"/>
</dbReference>
<dbReference type="GO" id="GO:0043335">
    <property type="term" value="P:protein unfolding"/>
    <property type="evidence" value="ECO:0007669"/>
    <property type="project" value="TreeGrafter"/>
</dbReference>
<dbReference type="FunFam" id="3.10.50.40:FF:000001">
    <property type="entry name" value="Trigger factor"/>
    <property type="match status" value="1"/>
</dbReference>
<dbReference type="Gene3D" id="3.10.50.40">
    <property type="match status" value="1"/>
</dbReference>
<dbReference type="Gene3D" id="3.30.70.1050">
    <property type="entry name" value="Trigger factor ribosome-binding domain"/>
    <property type="match status" value="1"/>
</dbReference>
<dbReference type="Gene3D" id="1.10.3120.10">
    <property type="entry name" value="Trigger factor, C-terminal domain"/>
    <property type="match status" value="1"/>
</dbReference>
<dbReference type="HAMAP" id="MF_00303">
    <property type="entry name" value="Trigger_factor_Tig"/>
    <property type="match status" value="1"/>
</dbReference>
<dbReference type="InterPro" id="IPR046357">
    <property type="entry name" value="PPIase_dom_sf"/>
</dbReference>
<dbReference type="InterPro" id="IPR001179">
    <property type="entry name" value="PPIase_FKBP_dom"/>
</dbReference>
<dbReference type="InterPro" id="IPR005215">
    <property type="entry name" value="Trig_fac"/>
</dbReference>
<dbReference type="InterPro" id="IPR008880">
    <property type="entry name" value="Trigger_fac_C"/>
</dbReference>
<dbReference type="InterPro" id="IPR037041">
    <property type="entry name" value="Trigger_fac_C_sf"/>
</dbReference>
<dbReference type="InterPro" id="IPR008881">
    <property type="entry name" value="Trigger_fac_ribosome-bd_bac"/>
</dbReference>
<dbReference type="InterPro" id="IPR036611">
    <property type="entry name" value="Trigger_fac_ribosome-bd_sf"/>
</dbReference>
<dbReference type="InterPro" id="IPR027304">
    <property type="entry name" value="Trigger_fact/SurA_dom_sf"/>
</dbReference>
<dbReference type="NCBIfam" id="TIGR00115">
    <property type="entry name" value="tig"/>
    <property type="match status" value="1"/>
</dbReference>
<dbReference type="PANTHER" id="PTHR30560">
    <property type="entry name" value="TRIGGER FACTOR CHAPERONE AND PEPTIDYL-PROLYL CIS/TRANS ISOMERASE"/>
    <property type="match status" value="1"/>
</dbReference>
<dbReference type="PANTHER" id="PTHR30560:SF3">
    <property type="entry name" value="TRIGGER FACTOR-LIKE PROTEIN TIG, CHLOROPLASTIC"/>
    <property type="match status" value="1"/>
</dbReference>
<dbReference type="Pfam" id="PF00254">
    <property type="entry name" value="FKBP_C"/>
    <property type="match status" value="1"/>
</dbReference>
<dbReference type="Pfam" id="PF05698">
    <property type="entry name" value="Trigger_C"/>
    <property type="match status" value="1"/>
</dbReference>
<dbReference type="Pfam" id="PF05697">
    <property type="entry name" value="Trigger_N"/>
    <property type="match status" value="1"/>
</dbReference>
<dbReference type="PIRSF" id="PIRSF003095">
    <property type="entry name" value="Trigger_factor"/>
    <property type="match status" value="1"/>
</dbReference>
<dbReference type="SUPFAM" id="SSF54534">
    <property type="entry name" value="FKBP-like"/>
    <property type="match status" value="1"/>
</dbReference>
<dbReference type="SUPFAM" id="SSF109998">
    <property type="entry name" value="Triger factor/SurA peptide-binding domain-like"/>
    <property type="match status" value="1"/>
</dbReference>
<dbReference type="SUPFAM" id="SSF102735">
    <property type="entry name" value="Trigger factor ribosome-binding domain"/>
    <property type="match status" value="1"/>
</dbReference>
<dbReference type="PROSITE" id="PS50059">
    <property type="entry name" value="FKBP_PPIASE"/>
    <property type="match status" value="1"/>
</dbReference>
<proteinExistence type="inferred from homology"/>